<protein>
    <recommendedName>
        <fullName>P2X purinoceptor 7</fullName>
        <shortName>P2X7</shortName>
    </recommendedName>
    <alternativeName>
        <fullName>ATP receptor</fullName>
    </alternativeName>
    <alternativeName>
        <fullName evidence="13">P2Z receptor</fullName>
    </alternativeName>
    <alternativeName>
        <fullName>Purinergic receptor</fullName>
    </alternativeName>
</protein>
<organism>
    <name type="scientific">Rattus norvegicus</name>
    <name type="common">Rat</name>
    <dbReference type="NCBI Taxonomy" id="10116"/>
    <lineage>
        <taxon>Eukaryota</taxon>
        <taxon>Metazoa</taxon>
        <taxon>Chordata</taxon>
        <taxon>Craniata</taxon>
        <taxon>Vertebrata</taxon>
        <taxon>Euteleostomi</taxon>
        <taxon>Mammalia</taxon>
        <taxon>Eutheria</taxon>
        <taxon>Euarchontoglires</taxon>
        <taxon>Glires</taxon>
        <taxon>Rodentia</taxon>
        <taxon>Myomorpha</taxon>
        <taxon>Muroidea</taxon>
        <taxon>Muridae</taxon>
        <taxon>Murinae</taxon>
        <taxon>Rattus</taxon>
    </lineage>
</organism>
<sequence>MPACCSWNDVFQYETNKVTRIQSVNYGTIKWILHMTVFSYVSFALMSDKLYQRKEPLISSVHTKVKGVAEVTENVTEGGVTKLVHGIFDTADYTLPLQGNSFFVMTNYLKSEGQEQKLCPEYPSRGKQCHSDQGCIKGWMDPQSKGIQTGRCIPYDQKRKTCEIFAWCPAEEGKEAPRPALLRSAENFTVLIKNNIDFPGHNYTTRNILPGMNISCTFHKTWNPQCPIFRLGDIFQEIGENFTEVAVQGGIMGIEIYWDCNLDSWSHRCQPKYSFRRLDDKYTNESLFPGYNFRYAKYYKENGMEKRTLIKAFGVRFDILVFGTGGKFDIIQLVVYIGSTLSYFGLATVCIDLIINTYASTCCRSRVYPSCKCCEPCAVNEYYYRKKCEPIVEPKPTLKYVSFVDEPHIWMVDQQLLGKSLQDVKGQEVPRPQTDFLELSRLSLSLHHSPPIPGQPEEMQLLQIEAVPRSRDSPDWCQCGNCLPSQLPENRRALEELCCRRKPGQCITTSELFSKIVLSREALQLLLLYQEPLLALEGEAINSKLRHCAYRSYATWRFVSQDMADFAILPSCCRWKIRKEFPKTQGQYSGFKYPY</sequence>
<gene>
    <name type="primary">P2rx7</name>
</gene>
<feature type="chain" id="PRO_0000161562" description="P2X purinoceptor 7">
    <location>
        <begin position="1"/>
        <end position="595"/>
    </location>
</feature>
<feature type="topological domain" description="Cytoplasmic" evidence="14">
    <location>
        <begin position="1"/>
        <end position="22"/>
    </location>
</feature>
<feature type="transmembrane region" description="Helical; Name=1" evidence="8 17">
    <location>
        <begin position="23"/>
        <end position="46"/>
    </location>
</feature>
<feature type="topological domain" description="Extracellular" evidence="14">
    <location>
        <begin position="47"/>
        <end position="328"/>
    </location>
</feature>
<feature type="transmembrane region" description="Helical; Name=2" evidence="8 17">
    <location>
        <begin position="329"/>
        <end position="353"/>
    </location>
</feature>
<feature type="topological domain" description="Cytoplasmic" evidence="14">
    <location>
        <begin position="354"/>
        <end position="595"/>
    </location>
</feature>
<feature type="region of interest" description="C-cys anchor" evidence="8">
    <location>
        <begin position="360"/>
        <end position="377"/>
    </location>
</feature>
<feature type="region of interest" description="Cytoplasmic ballast" evidence="8">
    <location>
        <begin position="395"/>
        <end position="595"/>
    </location>
</feature>
<feature type="binding site" evidence="8 18">
    <location>
        <position position="189"/>
    </location>
    <ligand>
        <name>ATP</name>
        <dbReference type="ChEBI" id="CHEBI:30616"/>
    </ligand>
</feature>
<feature type="binding site" evidence="8 18">
    <location>
        <position position="294"/>
    </location>
    <ligand>
        <name>ATP</name>
        <dbReference type="ChEBI" id="CHEBI:30616"/>
    </ligand>
</feature>
<feature type="binding site" evidence="8 18">
    <location>
        <position position="311"/>
    </location>
    <ligand>
        <name>ATP</name>
        <dbReference type="ChEBI" id="CHEBI:30616"/>
    </ligand>
</feature>
<feature type="binding site" evidence="9 10 20">
    <location>
        <position position="342"/>
    </location>
    <ligand>
        <name>Na(+)</name>
        <dbReference type="ChEBI" id="CHEBI:29101"/>
        <note>ligand shared between homotrimeric partners</note>
    </ligand>
</feature>
<feature type="binding site" evidence="8 9 10 16 17">
    <location>
        <position position="479"/>
    </location>
    <ligand>
        <name>Zn(2+)</name>
        <dbReference type="ChEBI" id="CHEBI:29105"/>
    </ligand>
</feature>
<feature type="binding site" evidence="8 9 10 16 17">
    <location>
        <position position="499"/>
    </location>
    <ligand>
        <name>Zn(2+)</name>
        <dbReference type="ChEBI" id="CHEBI:29105"/>
    </ligand>
</feature>
<feature type="binding site" evidence="8 9 10 16 17">
    <location>
        <position position="506"/>
    </location>
    <ligand>
        <name>Zn(2+)</name>
        <dbReference type="ChEBI" id="CHEBI:29105"/>
    </ligand>
</feature>
<feature type="binding site" evidence="9 19">
    <location>
        <position position="546"/>
    </location>
    <ligand>
        <name>GTP</name>
        <dbReference type="ChEBI" id="CHEBI:37565"/>
    </ligand>
</feature>
<feature type="binding site" evidence="9 19">
    <location>
        <position position="547"/>
    </location>
    <ligand>
        <name>GTP</name>
        <dbReference type="ChEBI" id="CHEBI:37565"/>
    </ligand>
</feature>
<feature type="binding site" evidence="9 19">
    <location>
        <position position="550"/>
    </location>
    <ligand>
        <name>GTP</name>
        <dbReference type="ChEBI" id="CHEBI:37565"/>
    </ligand>
</feature>
<feature type="binding site" evidence="9 19">
    <location>
        <position position="567"/>
    </location>
    <ligand>
        <name>GTP</name>
        <dbReference type="ChEBI" id="CHEBI:37565"/>
    </ligand>
</feature>
<feature type="binding site" evidence="8 9 10 16 17">
    <location>
        <position position="572"/>
    </location>
    <ligand>
        <name>Zn(2+)</name>
        <dbReference type="ChEBI" id="CHEBI:29105"/>
    </ligand>
</feature>
<feature type="binding site" evidence="9 19">
    <location>
        <position position="583"/>
    </location>
    <ligand>
        <name>GTP</name>
        <dbReference type="ChEBI" id="CHEBI:37565"/>
    </ligand>
</feature>
<feature type="binding site" evidence="9 19">
    <location>
        <position position="589"/>
    </location>
    <ligand>
        <name>GTP</name>
        <dbReference type="ChEBI" id="CHEBI:37565"/>
    </ligand>
</feature>
<feature type="binding site" evidence="9 19">
    <location>
        <position position="590"/>
    </location>
    <ligand>
        <name>GTP</name>
        <dbReference type="ChEBI" id="CHEBI:37565"/>
    </ligand>
</feature>
<feature type="site" description="Selectivity filter 1" evidence="1">
    <location>
        <position position="342"/>
    </location>
</feature>
<feature type="modified residue" description="ADP-ribosylarginine" evidence="2">
    <location>
        <position position="125"/>
    </location>
</feature>
<feature type="lipid moiety-binding region" description="S-palmitoyl cysteine" evidence="8 15">
    <location>
        <position position="4"/>
    </location>
</feature>
<feature type="lipid moiety-binding region" description="S-palmitoyl cysteine" evidence="8 9 15 19">
    <location>
        <position position="362"/>
    </location>
</feature>
<feature type="lipid moiety-binding region" description="S-palmitoyl cysteine" evidence="8 9 15 19">
    <location>
        <position position="363"/>
    </location>
</feature>
<feature type="lipid moiety-binding region" description="S-palmitoyl cysteine" evidence="8 9 15 19">
    <location>
        <position position="374"/>
    </location>
</feature>
<feature type="lipid moiety-binding region" description="S-palmitoyl cysteine" evidence="8 9 15 19">
    <location>
        <position position="377"/>
    </location>
</feature>
<feature type="glycosylation site" description="N-linked (GlcNAc...) asparagine" evidence="3">
    <location>
        <position position="74"/>
    </location>
</feature>
<feature type="glycosylation site" description="N-linked (GlcNAc...) asparagine" evidence="9 19 23">
    <location>
        <position position="187"/>
    </location>
</feature>
<feature type="glycosylation site" description="N-linked (GlcNAc...) asparagine" evidence="8 9 17 19">
    <location>
        <position position="202"/>
    </location>
</feature>
<feature type="glycosylation site" description="N-linked (GlcNAc...) asparagine" evidence="8 17 23">
    <location>
        <position position="213"/>
    </location>
</feature>
<feature type="glycosylation site" description="N-linked (GlcNAc...) asparagine" evidence="8 9 17 19">
    <location>
        <position position="241"/>
    </location>
</feature>
<feature type="glycosylation site" description="N-linked (GlcNAc...) asparagine" evidence="8 17">
    <location>
        <position position="284"/>
    </location>
</feature>
<feature type="disulfide bond" evidence="8 9">
    <location>
        <begin position="119"/>
        <end position="168"/>
    </location>
</feature>
<feature type="disulfide bond" evidence="9">
    <location>
        <begin position="129"/>
        <end position="152"/>
    </location>
</feature>
<feature type="disulfide bond" evidence="8 9">
    <location>
        <begin position="135"/>
        <end position="162"/>
    </location>
</feature>
<feature type="disulfide bond" evidence="8 9">
    <location>
        <begin position="216"/>
        <end position="226"/>
    </location>
</feature>
<feature type="disulfide bond" evidence="8 9">
    <location>
        <begin position="260"/>
        <end position="269"/>
    </location>
</feature>
<feature type="splice variant" id="VSP_062516" description="In isoform 2.">
    <original>MPACCSWNDVFQYETNKVTRIQSVNYGTIKWILHMTVFSYVS</original>
    <variation>MLPVRHLCSYNSAKVLHIHSTRLGALKNFFLLAICIYIC</variation>
    <location>
        <begin position="1"/>
        <end position="42"/>
    </location>
</feature>
<feature type="mutagenesis site" description="Decreases inhibitory potencies of antagonists." evidence="10">
    <original>F</original>
    <variation>A</variation>
    <location>
        <position position="88"/>
    </location>
</feature>
<feature type="mutagenesis site" description="Decreases inhibitory potencies of antagonists." evidence="10">
    <original>F</original>
    <variation>A</variation>
    <location>
        <position position="103"/>
    </location>
</feature>
<feature type="mutagenesis site" description="Moderately decreases the affinity for BzATP. Does not affect the binding affinity of ATP." evidence="9">
    <original>R</original>
    <variation>A</variation>
    <location>
        <position position="125"/>
    </location>
</feature>
<feature type="mutagenesis site" description="Reduces the affinity for both ATP and BzATP." evidence="9">
    <original>Q</original>
    <variation>A</variation>
    <location>
        <position position="143"/>
    </location>
</feature>
<feature type="mutagenesis site" description="Does not significantly affect the affinity for either ATP or BzATP." evidence="9">
    <original>I</original>
    <variation>A</variation>
    <location>
        <position position="214"/>
    </location>
</feature>
<feature type="mutagenesis site" description="Does not affect the inhibitory potency of the tested antagonists." evidence="10">
    <original>K</original>
    <variation>V</variation>
    <location>
        <position position="297"/>
    </location>
</feature>
<feature type="helix" evidence="25">
    <location>
        <begin position="7"/>
        <end position="10"/>
    </location>
</feature>
<feature type="strand" evidence="25">
    <location>
        <begin position="13"/>
        <end position="16"/>
    </location>
</feature>
<feature type="strand" evidence="25">
    <location>
        <begin position="18"/>
        <end position="22"/>
    </location>
</feature>
<feature type="helix" evidence="25">
    <location>
        <begin position="24"/>
        <end position="47"/>
    </location>
</feature>
<feature type="turn" evidence="25">
    <location>
        <begin position="48"/>
        <end position="51"/>
    </location>
</feature>
<feature type="strand" evidence="25">
    <location>
        <begin position="52"/>
        <end position="56"/>
    </location>
</feature>
<feature type="strand" evidence="25">
    <location>
        <begin position="58"/>
        <end position="66"/>
    </location>
</feature>
<feature type="strand" evidence="25">
    <location>
        <begin position="69"/>
        <end position="73"/>
    </location>
</feature>
<feature type="strand" evidence="25">
    <location>
        <begin position="84"/>
        <end position="88"/>
    </location>
</feature>
<feature type="helix" evidence="25">
    <location>
        <begin position="90"/>
        <end position="93"/>
    </location>
</feature>
<feature type="strand" evidence="25">
    <location>
        <begin position="99"/>
        <end position="120"/>
    </location>
</feature>
<feature type="strand" evidence="25">
    <location>
        <begin position="129"/>
        <end position="131"/>
    </location>
</feature>
<feature type="helix" evidence="25">
    <location>
        <begin position="132"/>
        <end position="134"/>
    </location>
</feature>
<feature type="strand" evidence="26">
    <location>
        <begin position="137"/>
        <end position="141"/>
    </location>
</feature>
<feature type="turn" evidence="25">
    <location>
        <begin position="142"/>
        <end position="145"/>
    </location>
</feature>
<feature type="strand" evidence="25">
    <location>
        <begin position="146"/>
        <end position="153"/>
    </location>
</feature>
<feature type="strand" evidence="25">
    <location>
        <begin position="155"/>
        <end position="158"/>
    </location>
</feature>
<feature type="strand" evidence="25">
    <location>
        <begin position="160"/>
        <end position="169"/>
    </location>
</feature>
<feature type="helix" evidence="25">
    <location>
        <begin position="183"/>
        <end position="187"/>
    </location>
</feature>
<feature type="strand" evidence="25">
    <location>
        <begin position="189"/>
        <end position="198"/>
    </location>
</feature>
<feature type="turn" evidence="25">
    <location>
        <begin position="199"/>
        <end position="202"/>
    </location>
</feature>
<feature type="strand" evidence="25">
    <location>
        <begin position="203"/>
        <end position="207"/>
    </location>
</feature>
<feature type="strand" evidence="25">
    <location>
        <begin position="220"/>
        <end position="222"/>
    </location>
</feature>
<feature type="strand" evidence="25">
    <location>
        <begin position="228"/>
        <end position="230"/>
    </location>
</feature>
<feature type="helix" evidence="25">
    <location>
        <begin position="231"/>
        <end position="237"/>
    </location>
</feature>
<feature type="helix" evidence="25">
    <location>
        <begin position="242"/>
        <end position="248"/>
    </location>
</feature>
<feature type="strand" evidence="25">
    <location>
        <begin position="250"/>
        <end position="261"/>
    </location>
</feature>
<feature type="helix" evidence="25">
    <location>
        <begin position="264"/>
        <end position="266"/>
    </location>
</feature>
<feature type="strand" evidence="25">
    <location>
        <begin position="271"/>
        <end position="277"/>
    </location>
</feature>
<feature type="helix" evidence="25">
    <location>
        <begin position="285"/>
        <end position="287"/>
    </location>
</feature>
<feature type="strand" evidence="25">
    <location>
        <begin position="292"/>
        <end position="301"/>
    </location>
</feature>
<feature type="strand" evidence="25">
    <location>
        <begin position="304"/>
        <end position="328"/>
    </location>
</feature>
<feature type="helix" evidence="25">
    <location>
        <begin position="330"/>
        <end position="341"/>
    </location>
</feature>
<feature type="helix" evidence="25">
    <location>
        <begin position="342"/>
        <end position="345"/>
    </location>
</feature>
<feature type="helix" evidence="25">
    <location>
        <begin position="346"/>
        <end position="358"/>
    </location>
</feature>
<feature type="helix" evidence="25">
    <location>
        <begin position="362"/>
        <end position="365"/>
    </location>
</feature>
<feature type="helix" evidence="25">
    <location>
        <begin position="367"/>
        <end position="370"/>
    </location>
</feature>
<feature type="strand" evidence="24">
    <location>
        <begin position="372"/>
        <end position="374"/>
    </location>
</feature>
<feature type="helix" evidence="25">
    <location>
        <begin position="376"/>
        <end position="378"/>
    </location>
</feature>
<feature type="helix" evidence="25">
    <location>
        <begin position="379"/>
        <end position="387"/>
    </location>
</feature>
<feature type="strand" evidence="25">
    <location>
        <begin position="388"/>
        <end position="392"/>
    </location>
</feature>
<feature type="strand" evidence="25">
    <location>
        <begin position="399"/>
        <end position="402"/>
    </location>
</feature>
<feature type="strand" evidence="25">
    <location>
        <begin position="404"/>
        <end position="412"/>
    </location>
</feature>
<feature type="strand" evidence="25">
    <location>
        <begin position="417"/>
        <end position="419"/>
    </location>
</feature>
<feature type="turn" evidence="25">
    <location>
        <begin position="421"/>
        <end position="423"/>
    </location>
</feature>
<feature type="strand" evidence="25">
    <location>
        <begin position="427"/>
        <end position="429"/>
    </location>
</feature>
<feature type="helix" evidence="25">
    <location>
        <begin position="436"/>
        <end position="439"/>
    </location>
</feature>
<feature type="strand" evidence="25">
    <location>
        <begin position="478"/>
        <end position="480"/>
    </location>
</feature>
<feature type="helix" evidence="25">
    <location>
        <begin position="489"/>
        <end position="495"/>
    </location>
</feature>
<feature type="strand" evidence="25">
    <location>
        <begin position="501"/>
        <end position="503"/>
    </location>
</feature>
<feature type="helix" evidence="25">
    <location>
        <begin position="507"/>
        <end position="509"/>
    </location>
</feature>
<feature type="helix" evidence="25">
    <location>
        <begin position="511"/>
        <end position="516"/>
    </location>
</feature>
<feature type="helix" evidence="25">
    <location>
        <begin position="520"/>
        <end position="530"/>
    </location>
</feature>
<feature type="helix" evidence="25">
    <location>
        <begin position="538"/>
        <end position="558"/>
    </location>
</feature>
<feature type="helix" evidence="25">
    <location>
        <begin position="561"/>
        <end position="565"/>
    </location>
</feature>
<feature type="helix" evidence="25">
    <location>
        <begin position="571"/>
        <end position="580"/>
    </location>
</feature>
<feature type="strand" evidence="25">
    <location>
        <begin position="584"/>
        <end position="586"/>
    </location>
</feature>
<name>P2RX7_RAT</name>
<dbReference type="EMBL" id="X95882">
    <property type="protein sequence ID" value="CAA65131.1"/>
    <property type="molecule type" value="mRNA"/>
</dbReference>
<dbReference type="EMBL" id="FJ436445">
    <property type="protein sequence ID" value="ACR61396.1"/>
    <property type="molecule type" value="mRNA"/>
</dbReference>
<dbReference type="RefSeq" id="NP_062129.1">
    <molecule id="Q64663-1"/>
    <property type="nucleotide sequence ID" value="NM_019256.2"/>
</dbReference>
<dbReference type="RefSeq" id="XP_008767445.1">
    <molecule id="Q64663-2"/>
    <property type="nucleotide sequence ID" value="XM_008769223.4"/>
</dbReference>
<dbReference type="PDB" id="6U9V">
    <property type="method" value="EM"/>
    <property type="resolution" value="2.90 A"/>
    <property type="chains" value="A/B/C=1-595"/>
</dbReference>
<dbReference type="PDB" id="6U9W">
    <property type="method" value="EM"/>
    <property type="resolution" value="3.30 A"/>
    <property type="chains" value="A/B/C=1-595"/>
</dbReference>
<dbReference type="PDB" id="8TR5">
    <property type="method" value="EM"/>
    <property type="resolution" value="2.53 A"/>
    <property type="chains" value="A/B/C=1-595"/>
</dbReference>
<dbReference type="PDB" id="8TR6">
    <property type="method" value="EM"/>
    <property type="resolution" value="2.18 A"/>
    <property type="chains" value="A/B/C=1-595"/>
</dbReference>
<dbReference type="PDB" id="8TR7">
    <property type="method" value="EM"/>
    <property type="resolution" value="2.53 A"/>
    <property type="chains" value="A/B/C=1-595"/>
</dbReference>
<dbReference type="PDB" id="8TR8">
    <property type="method" value="EM"/>
    <property type="resolution" value="2.21 A"/>
    <property type="chains" value="A/B/C=1-595"/>
</dbReference>
<dbReference type="PDB" id="8TRA">
    <property type="method" value="EM"/>
    <property type="resolution" value="2.41 A"/>
    <property type="chains" value="A/B/C=1-595"/>
</dbReference>
<dbReference type="PDB" id="8TRB">
    <property type="method" value="EM"/>
    <property type="resolution" value="2.36 A"/>
    <property type="chains" value="A/B/C=1-595"/>
</dbReference>
<dbReference type="PDB" id="8TRJ">
    <property type="method" value="EM"/>
    <property type="resolution" value="2.78 A"/>
    <property type="chains" value="A/B/C=1-595"/>
</dbReference>
<dbReference type="PDB" id="8TRK">
    <property type="method" value="EM"/>
    <property type="resolution" value="2.69 A"/>
    <property type="chains" value="A/B/C=1-595"/>
</dbReference>
<dbReference type="PDB" id="8V4S">
    <property type="method" value="EM"/>
    <property type="resolution" value="2.49 A"/>
    <property type="chains" value="A/B/C=1-595"/>
</dbReference>
<dbReference type="PDBsum" id="6U9V"/>
<dbReference type="PDBsum" id="6U9W"/>
<dbReference type="PDBsum" id="8TR5"/>
<dbReference type="PDBsum" id="8TR6"/>
<dbReference type="PDBsum" id="8TR7"/>
<dbReference type="PDBsum" id="8TR8"/>
<dbReference type="PDBsum" id="8TRA"/>
<dbReference type="PDBsum" id="8TRB"/>
<dbReference type="PDBsum" id="8TRJ"/>
<dbReference type="PDBsum" id="8TRK"/>
<dbReference type="PDBsum" id="8V4S"/>
<dbReference type="EMDB" id="EMD-20702"/>
<dbReference type="EMDB" id="EMD-20703"/>
<dbReference type="EMDB" id="EMD-41570"/>
<dbReference type="EMDB" id="EMD-41571"/>
<dbReference type="EMDB" id="EMD-41572"/>
<dbReference type="EMDB" id="EMD-41573"/>
<dbReference type="EMDB" id="EMD-41575"/>
<dbReference type="EMDB" id="EMD-41576"/>
<dbReference type="EMDB" id="EMD-41581"/>
<dbReference type="EMDB" id="EMD-41582"/>
<dbReference type="EMDB" id="EMD-42976"/>
<dbReference type="SMR" id="Q64663"/>
<dbReference type="BioGRID" id="248286">
    <property type="interactions" value="11"/>
</dbReference>
<dbReference type="FunCoup" id="Q64663">
    <property type="interactions" value="790"/>
</dbReference>
<dbReference type="IntAct" id="Q64663">
    <property type="interactions" value="2"/>
</dbReference>
<dbReference type="MINT" id="Q64663"/>
<dbReference type="STRING" id="10116.ENSRNOP00000071169"/>
<dbReference type="BindingDB" id="Q64663"/>
<dbReference type="ChEMBL" id="CHEMBL2496"/>
<dbReference type="GuidetoPHARMACOLOGY" id="484"/>
<dbReference type="TCDB" id="1.A.7.1.12">
    <property type="family name" value="the atp-gated p2x receptor cation channel (p2x receptor) family"/>
</dbReference>
<dbReference type="GlyCosmos" id="Q64663">
    <property type="glycosylation" value="6 sites, 8 glycans"/>
</dbReference>
<dbReference type="GlyGen" id="Q64663">
    <property type="glycosylation" value="6 sites, 8 N-linked glycans (2 sites)"/>
</dbReference>
<dbReference type="iPTMnet" id="Q64663"/>
<dbReference type="PhosphoSitePlus" id="Q64663"/>
<dbReference type="SwissPalm" id="Q64663"/>
<dbReference type="PaxDb" id="10116-ENSRNOP00000001746"/>
<dbReference type="ABCD" id="Q64663">
    <property type="antibodies" value="4 sequenced antibodies"/>
</dbReference>
<dbReference type="GeneID" id="29665"/>
<dbReference type="KEGG" id="rno:29665"/>
<dbReference type="UCSC" id="RGD:3241">
    <molecule id="Q64663-1"/>
    <property type="organism name" value="rat"/>
</dbReference>
<dbReference type="AGR" id="RGD:3241"/>
<dbReference type="CTD" id="5027"/>
<dbReference type="RGD" id="3241">
    <property type="gene designation" value="P2rx7"/>
</dbReference>
<dbReference type="VEuPathDB" id="HostDB:ENSRNOG00000001296"/>
<dbReference type="eggNOG" id="ENOG502QSBN">
    <property type="taxonomic scope" value="Eukaryota"/>
</dbReference>
<dbReference type="HOGENOM" id="CLU_034469_7_0_1"/>
<dbReference type="InParanoid" id="Q64663"/>
<dbReference type="PhylomeDB" id="Q64663"/>
<dbReference type="TreeFam" id="TF328633"/>
<dbReference type="Reactome" id="R-RNO-139853">
    <property type="pathway name" value="Elevation of cytosolic Ca2+ levels"/>
</dbReference>
<dbReference type="Reactome" id="R-RNO-418346">
    <property type="pathway name" value="Platelet homeostasis"/>
</dbReference>
<dbReference type="Reactome" id="R-RNO-844456">
    <property type="pathway name" value="The NLRP3 inflammasome"/>
</dbReference>
<dbReference type="PRO" id="PR:Q64663"/>
<dbReference type="Proteomes" id="UP000002494">
    <property type="component" value="Chromosome 12"/>
</dbReference>
<dbReference type="Bgee" id="ENSRNOG00000001296">
    <property type="expression patterns" value="Expressed in liver and 19 other cell types or tissues"/>
</dbReference>
<dbReference type="ExpressionAtlas" id="Q64663">
    <property type="expression patterns" value="baseline and differential"/>
</dbReference>
<dbReference type="GO" id="GO:0032059">
    <property type="term" value="C:bleb"/>
    <property type="evidence" value="ECO:0000314"/>
    <property type="project" value="BHF-UCL"/>
</dbReference>
<dbReference type="GO" id="GO:0005911">
    <property type="term" value="C:cell-cell junction"/>
    <property type="evidence" value="ECO:0000266"/>
    <property type="project" value="RGD"/>
</dbReference>
<dbReference type="GO" id="GO:0005737">
    <property type="term" value="C:cytoplasm"/>
    <property type="evidence" value="ECO:0000314"/>
    <property type="project" value="BHF-UCL"/>
</dbReference>
<dbReference type="GO" id="GO:0009897">
    <property type="term" value="C:external side of plasma membrane"/>
    <property type="evidence" value="ECO:0000266"/>
    <property type="project" value="RGD"/>
</dbReference>
<dbReference type="GO" id="GO:0016020">
    <property type="term" value="C:membrane"/>
    <property type="evidence" value="ECO:0000266"/>
    <property type="project" value="RGD"/>
</dbReference>
<dbReference type="GO" id="GO:0005739">
    <property type="term" value="C:mitochondrion"/>
    <property type="evidence" value="ECO:0007669"/>
    <property type="project" value="GOC"/>
</dbReference>
<dbReference type="GO" id="GO:0031594">
    <property type="term" value="C:neuromuscular junction"/>
    <property type="evidence" value="ECO:0000266"/>
    <property type="project" value="RGD"/>
</dbReference>
<dbReference type="GO" id="GO:0043025">
    <property type="term" value="C:neuronal cell body"/>
    <property type="evidence" value="ECO:0000266"/>
    <property type="project" value="RGD"/>
</dbReference>
<dbReference type="GO" id="GO:0005635">
    <property type="term" value="C:nuclear envelope"/>
    <property type="evidence" value="ECO:0000314"/>
    <property type="project" value="RGD"/>
</dbReference>
<dbReference type="GO" id="GO:0005886">
    <property type="term" value="C:plasma membrane"/>
    <property type="evidence" value="ECO:0007669"/>
    <property type="project" value="InterPro"/>
</dbReference>
<dbReference type="GO" id="GO:0098794">
    <property type="term" value="C:postsynapse"/>
    <property type="evidence" value="ECO:0007669"/>
    <property type="project" value="GOC"/>
</dbReference>
<dbReference type="GO" id="GO:0032991">
    <property type="term" value="C:protein-containing complex"/>
    <property type="evidence" value="ECO:0000314"/>
    <property type="project" value="RGD"/>
</dbReference>
<dbReference type="GO" id="GO:0045202">
    <property type="term" value="C:synapse"/>
    <property type="evidence" value="ECO:0000266"/>
    <property type="project" value="RGD"/>
</dbReference>
<dbReference type="GO" id="GO:0043195">
    <property type="term" value="C:terminal bouton"/>
    <property type="evidence" value="ECO:0000314"/>
    <property type="project" value="RGD"/>
</dbReference>
<dbReference type="GO" id="GO:0005524">
    <property type="term" value="F:ATP binding"/>
    <property type="evidence" value="ECO:0007669"/>
    <property type="project" value="InterPro"/>
</dbReference>
<dbReference type="GO" id="GO:0015267">
    <property type="term" value="F:channel activity"/>
    <property type="evidence" value="ECO:0000314"/>
    <property type="project" value="MGI"/>
</dbReference>
<dbReference type="GO" id="GO:0005507">
    <property type="term" value="F:copper ion binding"/>
    <property type="evidence" value="ECO:0000314"/>
    <property type="project" value="RGD"/>
</dbReference>
<dbReference type="GO" id="GO:0004931">
    <property type="term" value="F:extracellularly ATP-gated monoatomic cation channel activity"/>
    <property type="evidence" value="ECO:0007669"/>
    <property type="project" value="InterPro"/>
</dbReference>
<dbReference type="GO" id="GO:0042802">
    <property type="term" value="F:identical protein binding"/>
    <property type="evidence" value="ECO:0000353"/>
    <property type="project" value="BHF-UCL"/>
</dbReference>
<dbReference type="GO" id="GO:0001530">
    <property type="term" value="F:lipopolysaccharide binding"/>
    <property type="evidence" value="ECO:0000266"/>
    <property type="project" value="RGD"/>
</dbReference>
<dbReference type="GO" id="GO:0000287">
    <property type="term" value="F:magnesium ion binding"/>
    <property type="evidence" value="ECO:0000314"/>
    <property type="project" value="RGD"/>
</dbReference>
<dbReference type="GO" id="GO:0005267">
    <property type="term" value="F:potassium channel activity"/>
    <property type="evidence" value="ECO:0000266"/>
    <property type="project" value="RGD"/>
</dbReference>
<dbReference type="GO" id="GO:0043539">
    <property type="term" value="F:protein serine/threonine kinase activator activity"/>
    <property type="evidence" value="ECO:0000315"/>
    <property type="project" value="RGD"/>
</dbReference>
<dbReference type="GO" id="GO:0001614">
    <property type="term" value="F:purinergic nucleotide receptor activity"/>
    <property type="evidence" value="ECO:0007669"/>
    <property type="project" value="InterPro"/>
</dbReference>
<dbReference type="GO" id="GO:0097110">
    <property type="term" value="F:scaffold protein binding"/>
    <property type="evidence" value="ECO:0000353"/>
    <property type="project" value="RGD"/>
</dbReference>
<dbReference type="GO" id="GO:0038023">
    <property type="term" value="F:signaling receptor activity"/>
    <property type="evidence" value="ECO:0000266"/>
    <property type="project" value="RGD"/>
</dbReference>
<dbReference type="GO" id="GO:0005102">
    <property type="term" value="F:signaling receptor binding"/>
    <property type="evidence" value="ECO:0000353"/>
    <property type="project" value="BHF-UCL"/>
</dbReference>
<dbReference type="GO" id="GO:0005272">
    <property type="term" value="F:sodium channel activity"/>
    <property type="evidence" value="ECO:0000266"/>
    <property type="project" value="RGD"/>
</dbReference>
<dbReference type="GO" id="GO:0008270">
    <property type="term" value="F:zinc ion binding"/>
    <property type="evidence" value="ECO:0000314"/>
    <property type="project" value="RGD"/>
</dbReference>
<dbReference type="GO" id="GO:0097190">
    <property type="term" value="P:apoptotic signaling pathway"/>
    <property type="evidence" value="ECO:0000314"/>
    <property type="project" value="BHF-UCL"/>
</dbReference>
<dbReference type="GO" id="GO:1904669">
    <property type="term" value="P:ATP export"/>
    <property type="evidence" value="ECO:0000315"/>
    <property type="project" value="RGD"/>
</dbReference>
<dbReference type="GO" id="GO:0032060">
    <property type="term" value="P:bleb assembly"/>
    <property type="evidence" value="ECO:0000314"/>
    <property type="project" value="BHF-UCL"/>
</dbReference>
<dbReference type="GO" id="GO:0070588">
    <property type="term" value="P:calcium ion transmembrane transport"/>
    <property type="evidence" value="ECO:0000318"/>
    <property type="project" value="GO_Central"/>
</dbReference>
<dbReference type="GO" id="GO:0006816">
    <property type="term" value="P:calcium ion transport"/>
    <property type="evidence" value="ECO:0000266"/>
    <property type="project" value="RGD"/>
</dbReference>
<dbReference type="GO" id="GO:0000902">
    <property type="term" value="P:cell morphogenesis"/>
    <property type="evidence" value="ECO:0000266"/>
    <property type="project" value="RGD"/>
</dbReference>
<dbReference type="GO" id="GO:0007166">
    <property type="term" value="P:cell surface receptor signaling pathway"/>
    <property type="evidence" value="ECO:0000314"/>
    <property type="project" value="BHF-UCL"/>
</dbReference>
<dbReference type="GO" id="GO:0006884">
    <property type="term" value="P:cell volume homeostasis"/>
    <property type="evidence" value="ECO:0000266"/>
    <property type="project" value="RGD"/>
</dbReference>
<dbReference type="GO" id="GO:0071359">
    <property type="term" value="P:cellular response to dsRNA"/>
    <property type="evidence" value="ECO:0000266"/>
    <property type="project" value="RGD"/>
</dbReference>
<dbReference type="GO" id="GO:0046513">
    <property type="term" value="P:ceramide biosynthetic process"/>
    <property type="evidence" value="ECO:0000266"/>
    <property type="project" value="RGD"/>
</dbReference>
<dbReference type="GO" id="GO:0032963">
    <property type="term" value="P:collagen metabolic process"/>
    <property type="evidence" value="ECO:0000266"/>
    <property type="project" value="RGD"/>
</dbReference>
<dbReference type="GO" id="GO:0050830">
    <property type="term" value="P:defense response to Gram-positive bacterium"/>
    <property type="evidence" value="ECO:0000266"/>
    <property type="project" value="RGD"/>
</dbReference>
<dbReference type="GO" id="GO:0051649">
    <property type="term" value="P:establishment of localization in cell"/>
    <property type="evidence" value="ECO:0000266"/>
    <property type="project" value="RGD"/>
</dbReference>
<dbReference type="GO" id="GO:0097191">
    <property type="term" value="P:extrinsic apoptotic signaling pathway"/>
    <property type="evidence" value="ECO:0000314"/>
    <property type="project" value="BHF-UCL"/>
</dbReference>
<dbReference type="GO" id="GO:0014051">
    <property type="term" value="P:gamma-aminobutyric acid secretion"/>
    <property type="evidence" value="ECO:0000266"/>
    <property type="project" value="RGD"/>
</dbReference>
<dbReference type="GO" id="GO:0010467">
    <property type="term" value="P:gene expression"/>
    <property type="evidence" value="ECO:0000266"/>
    <property type="project" value="RGD"/>
</dbReference>
<dbReference type="GO" id="GO:0014047">
    <property type="term" value="P:glutamate secretion"/>
    <property type="evidence" value="ECO:0000266"/>
    <property type="project" value="RGD"/>
</dbReference>
<dbReference type="GO" id="GO:0048873">
    <property type="term" value="P:homeostasis of number of cells within a tissue"/>
    <property type="evidence" value="ECO:0000266"/>
    <property type="project" value="RGD"/>
</dbReference>
<dbReference type="GO" id="GO:0006954">
    <property type="term" value="P:inflammatory response"/>
    <property type="evidence" value="ECO:0000266"/>
    <property type="project" value="RGD"/>
</dbReference>
<dbReference type="GO" id="GO:0070227">
    <property type="term" value="P:lymphocyte apoptotic process"/>
    <property type="evidence" value="ECO:0000266"/>
    <property type="project" value="RGD"/>
</dbReference>
<dbReference type="GO" id="GO:0000165">
    <property type="term" value="P:MAPK cascade"/>
    <property type="evidence" value="ECO:0000266"/>
    <property type="project" value="RGD"/>
</dbReference>
<dbReference type="GO" id="GO:0051899">
    <property type="term" value="P:membrane depolarization"/>
    <property type="evidence" value="ECO:0000314"/>
    <property type="project" value="BHF-UCL"/>
</dbReference>
<dbReference type="GO" id="GO:0006509">
    <property type="term" value="P:membrane protein ectodomain proteolysis"/>
    <property type="evidence" value="ECO:0000266"/>
    <property type="project" value="RGD"/>
</dbReference>
<dbReference type="GO" id="GO:0051882">
    <property type="term" value="P:mitochondrial depolarization"/>
    <property type="evidence" value="ECO:0000266"/>
    <property type="project" value="RGD"/>
</dbReference>
<dbReference type="GO" id="GO:0007005">
    <property type="term" value="P:mitochondrion organization"/>
    <property type="evidence" value="ECO:0000266"/>
    <property type="project" value="RGD"/>
</dbReference>
<dbReference type="GO" id="GO:0006812">
    <property type="term" value="P:monoatomic cation transport"/>
    <property type="evidence" value="ECO:0000266"/>
    <property type="project" value="RGD"/>
</dbReference>
<dbReference type="GO" id="GO:0043132">
    <property type="term" value="P:NAD transport"/>
    <property type="evidence" value="ECO:0000266"/>
    <property type="project" value="RGD"/>
</dbReference>
<dbReference type="GO" id="GO:0045779">
    <property type="term" value="P:negative regulation of bone resorption"/>
    <property type="evidence" value="ECO:0000266"/>
    <property type="project" value="RGD"/>
</dbReference>
<dbReference type="GO" id="GO:0045794">
    <property type="term" value="P:negative regulation of cell volume"/>
    <property type="evidence" value="ECO:0000266"/>
    <property type="project" value="RGD"/>
</dbReference>
<dbReference type="GO" id="GO:0043409">
    <property type="term" value="P:negative regulation of MAPK cascade"/>
    <property type="evidence" value="ECO:0000266"/>
    <property type="project" value="RGD"/>
</dbReference>
<dbReference type="GO" id="GO:0019228">
    <property type="term" value="P:neuronal action potential"/>
    <property type="evidence" value="ECO:0000314"/>
    <property type="project" value="RGD"/>
</dbReference>
<dbReference type="GO" id="GO:0001845">
    <property type="term" value="P:phagolysosome assembly"/>
    <property type="evidence" value="ECO:0000266"/>
    <property type="project" value="RGD"/>
</dbReference>
<dbReference type="GO" id="GO:0006649">
    <property type="term" value="P:phospholipid transfer to membrane"/>
    <property type="evidence" value="ECO:0000266"/>
    <property type="project" value="RGD"/>
</dbReference>
<dbReference type="GO" id="GO:0045332">
    <property type="term" value="P:phospholipid translocation"/>
    <property type="evidence" value="ECO:0000266"/>
    <property type="project" value="RGD"/>
</dbReference>
<dbReference type="GO" id="GO:0007009">
    <property type="term" value="P:plasma membrane organization"/>
    <property type="evidence" value="ECO:0000266"/>
    <property type="project" value="RGD"/>
</dbReference>
<dbReference type="GO" id="GO:0017121">
    <property type="term" value="P:plasma membrane phospholipid scrambling"/>
    <property type="evidence" value="ECO:0000266"/>
    <property type="project" value="RGD"/>
</dbReference>
<dbReference type="GO" id="GO:0046931">
    <property type="term" value="P:pore complex assembly"/>
    <property type="evidence" value="ECO:0000314"/>
    <property type="project" value="RGD"/>
</dbReference>
<dbReference type="GO" id="GO:0043065">
    <property type="term" value="P:positive regulation of apoptotic process"/>
    <property type="evidence" value="ECO:0000266"/>
    <property type="project" value="RGD"/>
</dbReference>
<dbReference type="GO" id="GO:1904172">
    <property type="term" value="P:positive regulation of bleb assembly"/>
    <property type="evidence" value="ECO:0000266"/>
    <property type="project" value="RGD"/>
</dbReference>
<dbReference type="GO" id="GO:0030501">
    <property type="term" value="P:positive regulation of bone mineralization"/>
    <property type="evidence" value="ECO:0000266"/>
    <property type="project" value="RGD"/>
</dbReference>
<dbReference type="GO" id="GO:0010524">
    <property type="term" value="P:positive regulation of calcium ion transport into cytosol"/>
    <property type="evidence" value="ECO:0000266"/>
    <property type="project" value="RGD"/>
</dbReference>
<dbReference type="GO" id="GO:0051495">
    <property type="term" value="P:positive regulation of cytoskeleton organization"/>
    <property type="evidence" value="ECO:0000314"/>
    <property type="project" value="BHF-UCL"/>
</dbReference>
<dbReference type="GO" id="GO:0014054">
    <property type="term" value="P:positive regulation of gamma-aminobutyric acid secretion"/>
    <property type="evidence" value="ECO:0000266"/>
    <property type="project" value="RGD"/>
</dbReference>
<dbReference type="GO" id="GO:0010628">
    <property type="term" value="P:positive regulation of gene expression"/>
    <property type="evidence" value="ECO:0000266"/>
    <property type="project" value="RGD"/>
</dbReference>
<dbReference type="GO" id="GO:0014049">
    <property type="term" value="P:positive regulation of glutamate secretion"/>
    <property type="evidence" value="ECO:0000266"/>
    <property type="project" value="RGD"/>
</dbReference>
<dbReference type="GO" id="GO:0045821">
    <property type="term" value="P:positive regulation of glycolytic process"/>
    <property type="evidence" value="ECO:0000266"/>
    <property type="project" value="RGD"/>
</dbReference>
<dbReference type="GO" id="GO:0032730">
    <property type="term" value="P:positive regulation of interleukin-1 alpha production"/>
    <property type="evidence" value="ECO:0000266"/>
    <property type="project" value="RGD"/>
</dbReference>
<dbReference type="GO" id="GO:0032731">
    <property type="term" value="P:positive regulation of interleukin-1 beta production"/>
    <property type="evidence" value="ECO:0000314"/>
    <property type="project" value="RGD"/>
</dbReference>
<dbReference type="GO" id="GO:0032755">
    <property type="term" value="P:positive regulation of interleukin-6 production"/>
    <property type="evidence" value="ECO:0000266"/>
    <property type="project" value="RGD"/>
</dbReference>
<dbReference type="GO" id="GO:0070230">
    <property type="term" value="P:positive regulation of lymphocyte apoptotic process"/>
    <property type="evidence" value="ECO:0000266"/>
    <property type="project" value="RGD"/>
</dbReference>
<dbReference type="GO" id="GO:0060907">
    <property type="term" value="P:positive regulation of macrophage cytokine production"/>
    <property type="evidence" value="ECO:0000266"/>
    <property type="project" value="RGD"/>
</dbReference>
<dbReference type="GO" id="GO:0043410">
    <property type="term" value="P:positive regulation of MAPK cascade"/>
    <property type="evidence" value="ECO:0000266"/>
    <property type="project" value="RGD"/>
</dbReference>
<dbReference type="GO" id="GO:0051901">
    <property type="term" value="P:positive regulation of mitochondrial depolarization"/>
    <property type="evidence" value="ECO:0000266"/>
    <property type="project" value="RGD"/>
</dbReference>
<dbReference type="GO" id="GO:0034767">
    <property type="term" value="P:positive regulation of monoatomic ion transmembrane transport"/>
    <property type="evidence" value="ECO:0000266"/>
    <property type="project" value="RGD"/>
</dbReference>
<dbReference type="GO" id="GO:1900227">
    <property type="term" value="P:positive regulation of NLRP3 inflammasome complex assembly"/>
    <property type="evidence" value="ECO:0000250"/>
    <property type="project" value="UniProtKB"/>
</dbReference>
<dbReference type="GO" id="GO:0045778">
    <property type="term" value="P:positive regulation of ossification"/>
    <property type="evidence" value="ECO:0000266"/>
    <property type="project" value="RGD"/>
</dbReference>
<dbReference type="GO" id="GO:0032308">
    <property type="term" value="P:positive regulation of prostaglandin secretion"/>
    <property type="evidence" value="ECO:0000266"/>
    <property type="project" value="RGD"/>
</dbReference>
<dbReference type="GO" id="GO:0050714">
    <property type="term" value="P:positive regulation of protein secretion"/>
    <property type="evidence" value="ECO:0000266"/>
    <property type="project" value="RGD"/>
</dbReference>
<dbReference type="GO" id="GO:0070234">
    <property type="term" value="P:positive regulation of T cell apoptotic process"/>
    <property type="evidence" value="ECO:0000266"/>
    <property type="project" value="RGD"/>
</dbReference>
<dbReference type="GO" id="GO:0001916">
    <property type="term" value="P:positive regulation of T cell mediated cytotoxicity"/>
    <property type="evidence" value="ECO:0000266"/>
    <property type="project" value="RGD"/>
</dbReference>
<dbReference type="GO" id="GO:0012501">
    <property type="term" value="P:programmed cell death"/>
    <property type="evidence" value="ECO:0000266"/>
    <property type="project" value="RGD"/>
</dbReference>
<dbReference type="GO" id="GO:0032310">
    <property type="term" value="P:prostaglandin secretion"/>
    <property type="evidence" value="ECO:0000266"/>
    <property type="project" value="RGD"/>
</dbReference>
<dbReference type="GO" id="GO:0030163">
    <property type="term" value="P:protein catabolic process"/>
    <property type="evidence" value="ECO:0000266"/>
    <property type="project" value="RGD"/>
</dbReference>
<dbReference type="GO" id="GO:0070207">
    <property type="term" value="P:protein homotrimerization"/>
    <property type="evidence" value="ECO:0000266"/>
    <property type="project" value="RGD"/>
</dbReference>
<dbReference type="GO" id="GO:0016485">
    <property type="term" value="P:protein processing"/>
    <property type="evidence" value="ECO:0000266"/>
    <property type="project" value="RGD"/>
</dbReference>
<dbReference type="GO" id="GO:0009306">
    <property type="term" value="P:protein secretion"/>
    <property type="evidence" value="ECO:0000266"/>
    <property type="project" value="RGD"/>
</dbReference>
<dbReference type="GO" id="GO:0035590">
    <property type="term" value="P:purinergic nucleotide receptor signaling pathway"/>
    <property type="evidence" value="ECO:0000266"/>
    <property type="project" value="RGD"/>
</dbReference>
<dbReference type="GO" id="GO:0072593">
    <property type="term" value="P:reactive oxygen species metabolic process"/>
    <property type="evidence" value="ECO:0000266"/>
    <property type="project" value="RGD"/>
</dbReference>
<dbReference type="GO" id="GO:0099161">
    <property type="term" value="P:regulation of presynaptic dense core granule exocytosis"/>
    <property type="evidence" value="ECO:0000314"/>
    <property type="project" value="SynGO"/>
</dbReference>
<dbReference type="GO" id="GO:0002028">
    <property type="term" value="P:regulation of sodium ion transport"/>
    <property type="evidence" value="ECO:0000314"/>
    <property type="project" value="BHF-UCL"/>
</dbReference>
<dbReference type="GO" id="GO:0051209">
    <property type="term" value="P:release of sequestered calcium ion into cytosol"/>
    <property type="evidence" value="ECO:0000266"/>
    <property type="project" value="RGD"/>
</dbReference>
<dbReference type="GO" id="GO:0033198">
    <property type="term" value="P:response to ATP"/>
    <property type="evidence" value="ECO:0007669"/>
    <property type="project" value="InterPro"/>
</dbReference>
<dbReference type="GO" id="GO:0009617">
    <property type="term" value="P:response to bacterium"/>
    <property type="evidence" value="ECO:0000266"/>
    <property type="project" value="RGD"/>
</dbReference>
<dbReference type="GO" id="GO:0051592">
    <property type="term" value="P:response to calcium ion"/>
    <property type="evidence" value="ECO:0000266"/>
    <property type="project" value="RGD"/>
</dbReference>
<dbReference type="GO" id="GO:0051602">
    <property type="term" value="P:response to electrical stimulus"/>
    <property type="evidence" value="ECO:0000266"/>
    <property type="project" value="RGD"/>
</dbReference>
<dbReference type="GO" id="GO:0034405">
    <property type="term" value="P:response to fluid shear stress"/>
    <property type="evidence" value="ECO:0000266"/>
    <property type="project" value="RGD"/>
</dbReference>
<dbReference type="GO" id="GO:0032496">
    <property type="term" value="P:response to lipopolysaccharide"/>
    <property type="evidence" value="ECO:0000266"/>
    <property type="project" value="RGD"/>
</dbReference>
<dbReference type="GO" id="GO:0009612">
    <property type="term" value="P:response to mechanical stimulus"/>
    <property type="evidence" value="ECO:0000266"/>
    <property type="project" value="RGD"/>
</dbReference>
<dbReference type="GO" id="GO:0009410">
    <property type="term" value="P:response to xenobiotic stimulus"/>
    <property type="evidence" value="ECO:0000266"/>
    <property type="project" value="RGD"/>
</dbReference>
<dbReference type="GO" id="GO:0010043">
    <property type="term" value="P:response to zinc ion"/>
    <property type="evidence" value="ECO:0000266"/>
    <property type="project" value="RGD"/>
</dbReference>
<dbReference type="GO" id="GO:0019233">
    <property type="term" value="P:sensory perception of pain"/>
    <property type="evidence" value="ECO:0000266"/>
    <property type="project" value="RGD"/>
</dbReference>
<dbReference type="GO" id="GO:0048705">
    <property type="term" value="P:skeletal system morphogenesis"/>
    <property type="evidence" value="ECO:0000266"/>
    <property type="project" value="RGD"/>
</dbReference>
<dbReference type="GO" id="GO:0016079">
    <property type="term" value="P:synaptic vesicle exocytosis"/>
    <property type="evidence" value="ECO:0000266"/>
    <property type="project" value="RGD"/>
</dbReference>
<dbReference type="GO" id="GO:0070231">
    <property type="term" value="P:T cell apoptotic process"/>
    <property type="evidence" value="ECO:0000266"/>
    <property type="project" value="RGD"/>
</dbReference>
<dbReference type="GO" id="GO:0043029">
    <property type="term" value="P:T cell homeostasis"/>
    <property type="evidence" value="ECO:0000266"/>
    <property type="project" value="RGD"/>
</dbReference>
<dbReference type="GO" id="GO:0001913">
    <property type="term" value="P:T cell mediated cytotoxicity"/>
    <property type="evidence" value="ECO:0000266"/>
    <property type="project" value="RGD"/>
</dbReference>
<dbReference type="GO" id="GO:0042098">
    <property type="term" value="P:T cell proliferation"/>
    <property type="evidence" value="ECO:0000266"/>
    <property type="project" value="RGD"/>
</dbReference>
<dbReference type="GO" id="GO:0006900">
    <property type="term" value="P:vesicle budding from membrane"/>
    <property type="evidence" value="ECO:0000266"/>
    <property type="project" value="RGD"/>
</dbReference>
<dbReference type="FunFam" id="2.60.490.10:FF:000002">
    <property type="entry name" value="P2X purinoceptor"/>
    <property type="match status" value="1"/>
</dbReference>
<dbReference type="FunFam" id="1.10.287.940:FF:000010">
    <property type="entry name" value="P2X receptor E"/>
    <property type="match status" value="1"/>
</dbReference>
<dbReference type="Gene3D" id="1.10.287.940">
    <property type="entry name" value="atp-gated p2x4 ion channel"/>
    <property type="match status" value="1"/>
</dbReference>
<dbReference type="Gene3D" id="2.60.490.10">
    <property type="entry name" value="atp-gated p2x4 ion channel domain"/>
    <property type="match status" value="1"/>
</dbReference>
<dbReference type="InterPro" id="IPR046815">
    <property type="entry name" value="P2RX7_C"/>
</dbReference>
<dbReference type="InterPro" id="IPR003050">
    <property type="entry name" value="P2X7_purinoceptor"/>
</dbReference>
<dbReference type="InterPro" id="IPR027309">
    <property type="entry name" value="P2X_extracellular_dom_sf"/>
</dbReference>
<dbReference type="InterPro" id="IPR001429">
    <property type="entry name" value="P2X_purnocptor"/>
</dbReference>
<dbReference type="InterPro" id="IPR053792">
    <property type="entry name" value="P2X_RECEPTOR_CS"/>
</dbReference>
<dbReference type="NCBIfam" id="TIGR00863">
    <property type="entry name" value="P2X"/>
    <property type="match status" value="1"/>
</dbReference>
<dbReference type="PANTHER" id="PTHR10125">
    <property type="entry name" value="P2X PURINOCEPTOR"/>
    <property type="match status" value="1"/>
</dbReference>
<dbReference type="PANTHER" id="PTHR10125:SF13">
    <property type="entry name" value="P2X PURINOCEPTOR 7"/>
    <property type="match status" value="1"/>
</dbReference>
<dbReference type="Pfam" id="PF20478">
    <property type="entry name" value="P2RX7_C"/>
    <property type="match status" value="1"/>
</dbReference>
<dbReference type="Pfam" id="PF00864">
    <property type="entry name" value="P2X_receptor"/>
    <property type="match status" value="1"/>
</dbReference>
<dbReference type="PRINTS" id="PR01314">
    <property type="entry name" value="P2X7RECEPTOR"/>
</dbReference>
<dbReference type="PRINTS" id="PR01307">
    <property type="entry name" value="P2XRECEPTOR"/>
</dbReference>
<dbReference type="PROSITE" id="PS01212">
    <property type="entry name" value="P2X_RECEPTOR"/>
    <property type="match status" value="1"/>
</dbReference>
<reference key="1">
    <citation type="journal article" date="1996" name="Science">
        <title>The cytolytic P2Z receptor for extracellular ATP identified as a P2X receptor (P2X7).</title>
        <authorList>
            <person name="Surprenant A."/>
            <person name="Rassendren F."/>
            <person name="Kawashima E."/>
            <person name="North R.A."/>
            <person name="Buell G.N."/>
        </authorList>
    </citation>
    <scope>NUCLEOTIDE SEQUENCE [MRNA]</scope>
    <scope>FUNCTION</scope>
    <scope>TRANSPORTER ACTIVITY</scope>
    <scope>ACTIVITY REGULATION</scope>
</reference>
<reference key="2">
    <citation type="journal article" date="2009" name="J. Biol. Chem.">
        <title>A functional P2X7 splice variant with an alternative transmembrane domain 1 escapes gene inactivation in P2X7 knock-out mice.</title>
        <authorList>
            <person name="Nicke A."/>
            <person name="Kuan Y.H."/>
            <person name="Masin M."/>
            <person name="Rettinger J."/>
            <person name="Marquez-Klaka B."/>
            <person name="Bender O."/>
            <person name="Gorecki D.C."/>
            <person name="Murrell-Lagnado R.D."/>
            <person name="Soto F."/>
        </authorList>
    </citation>
    <scope>NUCLEOTIDE SEQUENCE [MRNA] (ISOFORM 2)</scope>
    <scope>FUNCTION (ISOFORM 2)</scope>
    <source>
        <strain>Sprague-Dawley</strain>
    </source>
</reference>
<reference key="3">
    <citation type="journal article" date="1999" name="Nat. Neurosci.">
        <title>Pore dilation of neuronal P2X receptor channels.</title>
        <authorList>
            <person name="Virginio C."/>
            <person name="MacKenzie A."/>
            <person name="Rassendren F.A."/>
            <person name="North R.A."/>
            <person name="Surprenant A."/>
        </authorList>
    </citation>
    <scope>FUNCTION</scope>
    <scope>CAUTION</scope>
</reference>
<reference key="4">
    <citation type="journal article" date="2006" name="EMBO J.">
        <title>Pannexin-1 mediates large pore formation and interleukin-1beta release by the ATP-gated P2X7 receptor.</title>
        <authorList>
            <person name="Pelegrin P."/>
            <person name="Surprenant A."/>
        </authorList>
    </citation>
    <scope>FUNCTION</scope>
    <scope>CAUTION</scope>
</reference>
<reference key="5">
    <citation type="journal article" date="2008" name="J. Gen. Physiol.">
        <title>The P2X7 receptor channel pore dilates under physiological ion conditions.</title>
        <authorList>
            <person name="Yan Z."/>
            <person name="Li S."/>
            <person name="Liang Z."/>
            <person name="Tomic M."/>
            <person name="Stojilkovic S.S."/>
        </authorList>
    </citation>
    <scope>FUNCTION</scope>
</reference>
<reference key="6">
    <citation type="journal article" date="2013" name="J. Proteome Res.">
        <title>Site-specific glycan-peptide analysis for determination of N-glycoproteome heterogeneity.</title>
        <authorList>
            <person name="Parker B.L."/>
            <person name="Thaysen-Andersen M."/>
            <person name="Solis N."/>
            <person name="Scott N.E."/>
            <person name="Larsen M.R."/>
            <person name="Graham M.E."/>
            <person name="Packer N.H."/>
            <person name="Cordwell S.J."/>
        </authorList>
    </citation>
    <scope>GLYCOSYLATION [LARGE SCALE ANALYSIS] AT ASN-187 AND ASN-213</scope>
    <scope>IDENTIFICATION BY MASS SPECTROMETRY [LARGE SCALE ANALYSIS]</scope>
    <source>
        <tissue>Brain</tissue>
    </source>
</reference>
<reference evidence="17 18" key="7">
    <citation type="journal article" date="2019" name="Cell">
        <title>Full-Length P2X7 Structures Reveal How Palmitoylation Prevents Channel Desensitization.</title>
        <authorList>
            <person name="McCarthy A.E."/>
            <person name="Yoshioka C."/>
            <person name="Mansoor S.E."/>
        </authorList>
    </citation>
    <scope>STRUCTURE BY ELECTRON MICROSCOPY (2.90 ANGSTROMS) IN COMPLEX WITH ATP AND ZN(2+)</scope>
    <scope>GLYCOSYLATION AT ASN-202; ASN-213; ASN-241 AND ASN-284</scope>
    <scope>PALMITOYLATION AT CYS-4; CYS-362; CYS-363; CYS-374 AND CYS-377</scope>
    <scope>SUBUNIT</scope>
    <scope>ACTIVITY REGULATION</scope>
</reference>
<reference evidence="19 21 22" key="8">
    <citation type="journal article" date="2024" name="Nat. Commun.">
        <title>High-affinity agonism at the P2X7 receptor is mediated by three residues outside the orthosteric pocket.</title>
        <authorList>
            <person name="Oken A.C."/>
            <person name="Lisi N.E."/>
            <person name="Krishnamurthy I."/>
            <person name="McCarthy A.E."/>
            <person name="Godsey M.H."/>
            <person name="Glasfeld A."/>
            <person name="Mansoor S.E."/>
        </authorList>
    </citation>
    <scope>STRUCTURE BY ELECTRON MICROSCOPY (2.49 ANGSTROMS) IN COMPLEX WITH ZN(2+); GTP AND AGONIST BZ-ATP</scope>
    <scope>FUNCTION</scope>
    <scope>ACTIVITY REGULATION</scope>
    <scope>GLYCOSYLATION AT ASN-187; ASN-202 AND ASN-241</scope>
    <scope>DISULFIDE BOND</scope>
    <scope>MUTAGENESIS OF ARG-125; GLN-143 AND ILE-214</scope>
    <scope>PALMITOYLATION AT CYS-362; CYS-363; CYS-374 AND CYS-377</scope>
</reference>
<reference key="9">
    <citation type="journal article" date="2024" name="Sci. Adv.">
        <title>P2X7 receptors exhibit at least three modes of allosteric antagonism.</title>
        <authorList>
            <person name="Oken A.C."/>
            <person name="Ditter I.A."/>
            <person name="Lisi N.E."/>
            <person name="Krishnamurthy I."/>
            <person name="Godsey M.H."/>
            <person name="Mansoor S.E."/>
        </authorList>
    </citation>
    <scope>STRUCTURE BY ELECTRON MICROSCOPY (2.18 ANGSTROMS) IN COMPLEX WITH ANTAGONISTS</scope>
    <scope>MUTAGENESIS OF PHE-88; PHE-103 AND LYS-297</scope>
</reference>
<accession>Q64663</accession>
<accession>C8YIX5</accession>
<comment type="function">
    <text evidence="1 2 4 5 6 9 11">ATP-gated nonselective transmembrane cation channel that requires high millimolar concentrations of ATP for activation (PubMed:10204537, PubMed:39107314, PubMed:8614837). Upon ATP binding, it rapidly opens to allow the influx of small cations Na(+) and Ca(2+), and the K(+) efflux (PubMed:8614837). Also has the ability to form a large pore in the cell membrane, allowing the passage of large cationic molecules (PubMed:17036048, PubMed:18852304). In microglia, may mediate the transmembrane transport of exogenous NADPH (By similarity). In immune cells, P2RX7 acts as a molecular sensor in pathological inflammatory states by detecting and responding to high local concentrations of extracellar ATP. In microglial cells, P2RX7 activation leads to the release of pro-inflammatory cytokines, such as IL-1beta and IL-18, through the activation of the NLRP3 inflammasome and caspase-1. Cooperates with KCNK6 to activate NLRP3 inflammasome (By similarity). Activates death pathways leading to apoptosis and autophagy (By similarity). Activates death pathways leading to pyroptosis (By similarity).</text>
</comment>
<comment type="function">
    <molecule>Isoform 2</molecule>
    <text evidence="7">Has a higher affinity for ATP, slower deactivation and an increased propensity to form large cation-permeable pores.</text>
</comment>
<comment type="catalytic activity">
    <reaction evidence="11">
        <text>Ca(2+)(in) = Ca(2+)(out)</text>
        <dbReference type="Rhea" id="RHEA:29671"/>
        <dbReference type="ChEBI" id="CHEBI:29108"/>
    </reaction>
</comment>
<comment type="catalytic activity">
    <reaction evidence="1">
        <text>K(+)(in) = K(+)(out)</text>
        <dbReference type="Rhea" id="RHEA:29463"/>
        <dbReference type="ChEBI" id="CHEBI:29103"/>
    </reaction>
</comment>
<comment type="catalytic activity">
    <reaction evidence="11">
        <text>Na(+)(in) = Na(+)(out)</text>
        <dbReference type="Rhea" id="RHEA:34963"/>
        <dbReference type="ChEBI" id="CHEBI:29101"/>
    </reaction>
</comment>
<comment type="activity regulation">
    <text evidence="1 8 9 11">Activated by high extracellular ATP levels (0.1-2.5 mM) (PubMed:39107314, PubMed:8614837). The synthetic analog 2'(3')-O-(4-benzoylbenzoyl)ATP (BzATP) acts as a potent agonist. Does not undergo desensitization, instead, undergoes a facilitation process where currents progressively increase with repetitive or prolonged agonist application (PubMed:31587896). Palmitoylation prevents channel desensitization (PubMed:31587896). The permeability of the P2RX7 channel is modulated by the amount of cholesterol in the plasma membrane (By similarity).</text>
</comment>
<comment type="subunit">
    <text evidence="1 8 9">Homotrimer (PubMed:31587896, PubMed:39107314). Interacts with LAMA3, ITGB2, ACTB, ACTN4, SVIL, MPP3, HSPA1, HSPCB, HSPA8, PIK230 and PTPRB (By similarity). Interacts (via C-terminus) with EMP2 (By similarity).</text>
</comment>
<comment type="subcellular location">
    <subcellularLocation>
        <location evidence="1">Cell membrane</location>
        <topology evidence="8 9">Multi-pass membrane protein</topology>
    </subcellularLocation>
</comment>
<comment type="alternative products">
    <event type="alternative splicing"/>
    <isoform>
        <id>Q64663-1</id>
        <name>1</name>
        <sequence type="displayed"/>
    </isoform>
    <isoform>
        <id>Q64663-2</id>
        <name>2</name>
        <name evidence="12">K</name>
        <sequence type="described" ref="VSP_062516"/>
    </isoform>
</comment>
<comment type="domain">
    <text evidence="8">Contains two P2RX7-specific cytoplasmic domains, the C-cysteines (C-cys) anchor and the cytoplasmic ballast. Palmitoylation of the cytoplasmic C-cys anchor prevents receptor desensitization. The cytoplasmic ballast contains a zinc ion complex and a guanosine nucleotide binding site.</text>
</comment>
<comment type="PTM">
    <text evidence="1">Phosphorylation results in its inactivation.</text>
</comment>
<comment type="PTM">
    <text evidence="2">ADP-ribosylation at Arg-125 is necessary and sufficient to activate P2RX7 and gate the channel.</text>
</comment>
<comment type="PTM">
    <text evidence="1 8">Palmitoylation of several cysteines in the C-terminal cytoplasmic tail is required for efficient localization to cell surface (By similarity). Palmitoylation prevents channel desensitization by physically anchoring the palmitoylated groups to the membrane (PubMed:31587896).</text>
</comment>
<comment type="similarity">
    <text evidence="14">Belongs to the P2X receptor family.</text>
</comment>
<comment type="caution">
    <text evidence="1 4 5 11">Was originally thought to form a dilated pore (macropore) after prolonged exposure to ATP, permitting passage of large organic cations (PubMed:10204537, PubMed:8614837). Two mechanisms have been proposed to explain macropore formation: progressive dilatation and/or the recruitment of an accessory pore-forming molecule (PubMed:10204537, PubMed:17036048). However, convincing evidences now clearly suggest that P2RX7 channel itself has the ability to form a large-conductance pore in the absence of any significant dilatation. The P2RX7 channel allows the passage of large cationic molecules immediately from its initial activation, but at a much slower pace than that of the small cations Na(+), K(+), and Ca(2+) (By similarity).</text>
</comment>
<keyword id="KW-0002">3D-structure</keyword>
<keyword id="KW-0013">ADP-ribosylation</keyword>
<keyword id="KW-0025">Alternative splicing</keyword>
<keyword id="KW-1003">Cell membrane</keyword>
<keyword id="KW-1015">Disulfide bond</keyword>
<keyword id="KW-0325">Glycoprotein</keyword>
<keyword id="KW-0407">Ion channel</keyword>
<keyword id="KW-0406">Ion transport</keyword>
<keyword id="KW-1071">Ligand-gated ion channel</keyword>
<keyword id="KW-0449">Lipoprotein</keyword>
<keyword id="KW-0472">Membrane</keyword>
<keyword id="KW-0564">Palmitate</keyword>
<keyword id="KW-0597">Phosphoprotein</keyword>
<keyword id="KW-0675">Receptor</keyword>
<keyword id="KW-1185">Reference proteome</keyword>
<keyword id="KW-0812">Transmembrane</keyword>
<keyword id="KW-1133">Transmembrane helix</keyword>
<keyword id="KW-0813">Transport</keyword>
<proteinExistence type="evidence at protein level"/>
<evidence type="ECO:0000250" key="1">
    <source>
        <dbReference type="UniProtKB" id="Q99572"/>
    </source>
</evidence>
<evidence type="ECO:0000250" key="2">
    <source>
        <dbReference type="UniProtKB" id="Q9Z1M0"/>
    </source>
</evidence>
<evidence type="ECO:0000255" key="3"/>
<evidence type="ECO:0000269" key="4">
    <source>
    </source>
</evidence>
<evidence type="ECO:0000269" key="5">
    <source>
    </source>
</evidence>
<evidence type="ECO:0000269" key="6">
    <source>
    </source>
</evidence>
<evidence type="ECO:0000269" key="7">
    <source>
    </source>
</evidence>
<evidence type="ECO:0000269" key="8">
    <source>
    </source>
</evidence>
<evidence type="ECO:0000269" key="9">
    <source>
    </source>
</evidence>
<evidence type="ECO:0000269" key="10">
    <source>
    </source>
</evidence>
<evidence type="ECO:0000269" key="11">
    <source>
    </source>
</evidence>
<evidence type="ECO:0000303" key="12">
    <source>
    </source>
</evidence>
<evidence type="ECO:0000303" key="13">
    <source>
    </source>
</evidence>
<evidence type="ECO:0000305" key="14"/>
<evidence type="ECO:0000312" key="15">
    <source>
        <dbReference type="PDB" id="6U9V"/>
    </source>
</evidence>
<evidence type="ECO:0000312" key="16">
    <source>
        <dbReference type="PDB" id="8TR5"/>
    </source>
</evidence>
<evidence type="ECO:0007744" key="17">
    <source>
        <dbReference type="PDB" id="6U9V"/>
    </source>
</evidence>
<evidence type="ECO:0007744" key="18">
    <source>
        <dbReference type="PDB" id="6U9W"/>
    </source>
</evidence>
<evidence type="ECO:0007744" key="19">
    <source>
        <dbReference type="PDB" id="8TR5"/>
    </source>
</evidence>
<evidence type="ECO:0007744" key="20">
    <source>
        <dbReference type="PDB" id="8TR7"/>
    </source>
</evidence>
<evidence type="ECO:0007744" key="21">
    <source>
        <dbReference type="PDB" id="8TRJ"/>
    </source>
</evidence>
<evidence type="ECO:0007744" key="22">
    <source>
        <dbReference type="PDB" id="8V4S"/>
    </source>
</evidence>
<evidence type="ECO:0007744" key="23">
    <source>
    </source>
</evidence>
<evidence type="ECO:0007829" key="24">
    <source>
        <dbReference type="PDB" id="6U9V"/>
    </source>
</evidence>
<evidence type="ECO:0007829" key="25">
    <source>
        <dbReference type="PDB" id="8TR6"/>
    </source>
</evidence>
<evidence type="ECO:0007829" key="26">
    <source>
        <dbReference type="PDB" id="8TR8"/>
    </source>
</evidence>